<gene>
    <name evidence="1" type="primary">rlmF</name>
    <name type="ordered locus">YPDSF_1929</name>
</gene>
<sequence>MLSYAPENAYQRASTMENKKVFPKEKSGLHPRNRHRSRYDFDALSVSCPELIPFLAPTAYGDISVDFADPLAVKMLNKALLKHFYGIEYWDIPADSLCPPIPGRADYVHHLADLLASCNGEVIPKGKNIALLDIGVGANCIYPIIGQREYGWRFTGTDIDSHALSAAKMVVSMNPTLKNTLRLKQQKDPHAIFEGVWAVNERYDATLCNPPFHGSAEEAAATTRRKLHKLGKNEVAAKPVQNFGGKNSELWCEGGEEGFVSRMVAESVAKAQNCFWFTSLISKKTTLPAIYHALRYVKAVEVRTIEMAQGQKVSRFVAWTFLTLEQQAAWVAERWA</sequence>
<feature type="chain" id="PRO_0000349982" description="Ribosomal RNA large subunit methyltransferase F">
    <location>
        <begin position="1"/>
        <end position="336"/>
    </location>
</feature>
<accession>A4TM00</accession>
<dbReference type="EC" id="2.1.1.181" evidence="1"/>
<dbReference type="EMBL" id="CP000668">
    <property type="protein sequence ID" value="ABP40312.1"/>
    <property type="molecule type" value="Genomic_DNA"/>
</dbReference>
<dbReference type="SMR" id="A4TM00"/>
<dbReference type="KEGG" id="ypp:YPDSF_1929"/>
<dbReference type="GO" id="GO:0005737">
    <property type="term" value="C:cytoplasm"/>
    <property type="evidence" value="ECO:0007669"/>
    <property type="project" value="UniProtKB-SubCell"/>
</dbReference>
<dbReference type="GO" id="GO:0052907">
    <property type="term" value="F:23S rRNA (adenine(1618)-N(6))-methyltransferase activity"/>
    <property type="evidence" value="ECO:0007669"/>
    <property type="project" value="UniProtKB-EC"/>
</dbReference>
<dbReference type="GO" id="GO:0070475">
    <property type="term" value="P:rRNA base methylation"/>
    <property type="evidence" value="ECO:0007669"/>
    <property type="project" value="TreeGrafter"/>
</dbReference>
<dbReference type="CDD" id="cd02440">
    <property type="entry name" value="AdoMet_MTases"/>
    <property type="match status" value="1"/>
</dbReference>
<dbReference type="FunFam" id="3.40.50.150:FF:000045">
    <property type="entry name" value="Ribosomal RNA large subunit methyltransferase F"/>
    <property type="match status" value="1"/>
</dbReference>
<dbReference type="Gene3D" id="3.40.50.150">
    <property type="entry name" value="Vaccinia Virus protein VP39"/>
    <property type="match status" value="1"/>
</dbReference>
<dbReference type="HAMAP" id="MF_01848">
    <property type="entry name" value="23SrRNA_methyltr_F"/>
    <property type="match status" value="1"/>
</dbReference>
<dbReference type="InterPro" id="IPR010286">
    <property type="entry name" value="METTL16/RlmF"/>
</dbReference>
<dbReference type="InterPro" id="IPR016909">
    <property type="entry name" value="rRNA_lsu_MeTfrase_F"/>
</dbReference>
<dbReference type="InterPro" id="IPR029063">
    <property type="entry name" value="SAM-dependent_MTases_sf"/>
</dbReference>
<dbReference type="NCBIfam" id="NF008725">
    <property type="entry name" value="PRK11727.1"/>
    <property type="match status" value="1"/>
</dbReference>
<dbReference type="PANTHER" id="PTHR13393:SF0">
    <property type="entry name" value="RNA N6-ADENOSINE-METHYLTRANSFERASE METTL16"/>
    <property type="match status" value="1"/>
</dbReference>
<dbReference type="PANTHER" id="PTHR13393">
    <property type="entry name" value="SAM-DEPENDENT METHYLTRANSFERASE"/>
    <property type="match status" value="1"/>
</dbReference>
<dbReference type="Pfam" id="PF05971">
    <property type="entry name" value="Methyltransf_10"/>
    <property type="match status" value="1"/>
</dbReference>
<dbReference type="PIRSF" id="PIRSF029038">
    <property type="entry name" value="Mtase_YbiN_prd"/>
    <property type="match status" value="1"/>
</dbReference>
<dbReference type="SUPFAM" id="SSF53335">
    <property type="entry name" value="S-adenosyl-L-methionine-dependent methyltransferases"/>
    <property type="match status" value="1"/>
</dbReference>
<evidence type="ECO:0000255" key="1">
    <source>
        <dbReference type="HAMAP-Rule" id="MF_01848"/>
    </source>
</evidence>
<reference key="1">
    <citation type="submission" date="2007-02" db="EMBL/GenBank/DDBJ databases">
        <title>Complete sequence of chromosome of Yersinia pestis Pestoides F.</title>
        <authorList>
            <consortium name="US DOE Joint Genome Institute"/>
            <person name="Copeland A."/>
            <person name="Lucas S."/>
            <person name="Lapidus A."/>
            <person name="Barry K."/>
            <person name="Detter J.C."/>
            <person name="Glavina del Rio T."/>
            <person name="Hammon N."/>
            <person name="Israni S."/>
            <person name="Dalin E."/>
            <person name="Tice H."/>
            <person name="Pitluck S."/>
            <person name="Di Bartolo G."/>
            <person name="Chain P."/>
            <person name="Malfatti S."/>
            <person name="Shin M."/>
            <person name="Vergez L."/>
            <person name="Schmutz J."/>
            <person name="Larimer F."/>
            <person name="Land M."/>
            <person name="Hauser L."/>
            <person name="Worsham P."/>
            <person name="Chu M."/>
            <person name="Bearden S."/>
            <person name="Garcia E."/>
            <person name="Richardson P."/>
        </authorList>
    </citation>
    <scope>NUCLEOTIDE SEQUENCE [LARGE SCALE GENOMIC DNA]</scope>
    <source>
        <strain>Pestoides F</strain>
    </source>
</reference>
<comment type="function">
    <text evidence="1">Specifically methylates the adenine in position 1618 of 23S rRNA.</text>
</comment>
<comment type="catalytic activity">
    <reaction evidence="1">
        <text>adenosine(1618) in 23S rRNA + S-adenosyl-L-methionine = N(6)-methyladenosine(1618) in 23S rRNA + S-adenosyl-L-homocysteine + H(+)</text>
        <dbReference type="Rhea" id="RHEA:16497"/>
        <dbReference type="Rhea" id="RHEA-COMP:10229"/>
        <dbReference type="Rhea" id="RHEA-COMP:10231"/>
        <dbReference type="ChEBI" id="CHEBI:15378"/>
        <dbReference type="ChEBI" id="CHEBI:57856"/>
        <dbReference type="ChEBI" id="CHEBI:59789"/>
        <dbReference type="ChEBI" id="CHEBI:74411"/>
        <dbReference type="ChEBI" id="CHEBI:74449"/>
        <dbReference type="EC" id="2.1.1.181"/>
    </reaction>
</comment>
<comment type="subcellular location">
    <subcellularLocation>
        <location evidence="1">Cytoplasm</location>
    </subcellularLocation>
</comment>
<comment type="similarity">
    <text evidence="1">Belongs to the methyltransferase superfamily. METTL16/RlmF family.</text>
</comment>
<protein>
    <recommendedName>
        <fullName evidence="1">Ribosomal RNA large subunit methyltransferase F</fullName>
        <ecNumber evidence="1">2.1.1.181</ecNumber>
    </recommendedName>
    <alternativeName>
        <fullName evidence="1">23S rRNA mA1618 methyltransferase</fullName>
    </alternativeName>
    <alternativeName>
        <fullName evidence="1">rRNA adenine N-6-methyltransferase</fullName>
    </alternativeName>
</protein>
<proteinExistence type="inferred from homology"/>
<name>RLMF_YERPP</name>
<keyword id="KW-0963">Cytoplasm</keyword>
<keyword id="KW-0489">Methyltransferase</keyword>
<keyword id="KW-0698">rRNA processing</keyword>
<keyword id="KW-0949">S-adenosyl-L-methionine</keyword>
<keyword id="KW-0808">Transferase</keyword>
<organism>
    <name type="scientific">Yersinia pestis (strain Pestoides F)</name>
    <dbReference type="NCBI Taxonomy" id="386656"/>
    <lineage>
        <taxon>Bacteria</taxon>
        <taxon>Pseudomonadati</taxon>
        <taxon>Pseudomonadota</taxon>
        <taxon>Gammaproteobacteria</taxon>
        <taxon>Enterobacterales</taxon>
        <taxon>Yersiniaceae</taxon>
        <taxon>Yersinia</taxon>
    </lineage>
</organism>